<protein>
    <recommendedName>
        <fullName evidence="1">D-alanine--D-alanyl carrier protein ligase</fullName>
        <shortName evidence="1">DCL</shortName>
        <ecNumber evidence="1">6.2.1.54</ecNumber>
    </recommendedName>
    <alternativeName>
        <fullName evidence="1">D-alanine--poly(phosphoribitol) ligase subunit 1</fullName>
    </alternativeName>
    <alternativeName>
        <fullName evidence="1">D-alanine-activating enzyme</fullName>
        <shortName evidence="1">DAE</shortName>
    </alternativeName>
</protein>
<name>DLTA_LACPL</name>
<gene>
    <name evidence="1" type="primary">dltA</name>
    <name type="ordered locus">lp_2019</name>
</gene>
<keyword id="KW-0067">ATP-binding</keyword>
<keyword id="KW-0963">Cytoplasm</keyword>
<keyword id="KW-0436">Ligase</keyword>
<keyword id="KW-0547">Nucleotide-binding</keyword>
<keyword id="KW-1185">Reference proteome</keyword>
<proteinExistence type="inferred from homology"/>
<organism>
    <name type="scientific">Lactiplantibacillus plantarum (strain ATCC BAA-793 / NCIMB 8826 / WCFS1)</name>
    <name type="common">Lactobacillus plantarum</name>
    <dbReference type="NCBI Taxonomy" id="220668"/>
    <lineage>
        <taxon>Bacteria</taxon>
        <taxon>Bacillati</taxon>
        <taxon>Bacillota</taxon>
        <taxon>Bacilli</taxon>
        <taxon>Lactobacillales</taxon>
        <taxon>Lactobacillaceae</taxon>
        <taxon>Lactiplantibacillus</taxon>
    </lineage>
</organism>
<evidence type="ECO:0000255" key="1">
    <source>
        <dbReference type="HAMAP-Rule" id="MF_00593"/>
    </source>
</evidence>
<dbReference type="EC" id="6.2.1.54" evidence="1"/>
<dbReference type="EMBL" id="AL935263">
    <property type="protein sequence ID" value="CCC79267.1"/>
    <property type="molecule type" value="Genomic_DNA"/>
</dbReference>
<dbReference type="RefSeq" id="WP_003640707.1">
    <property type="nucleotide sequence ID" value="NC_004567.2"/>
</dbReference>
<dbReference type="RefSeq" id="YP_004889781.1">
    <property type="nucleotide sequence ID" value="NC_004567.2"/>
</dbReference>
<dbReference type="SMR" id="Q88VM6"/>
<dbReference type="STRING" id="220668.lp_2019"/>
<dbReference type="EnsemblBacteria" id="CCC79267">
    <property type="protein sequence ID" value="CCC79267"/>
    <property type="gene ID" value="lp_2019"/>
</dbReference>
<dbReference type="GeneID" id="77218345"/>
<dbReference type="KEGG" id="lpl:lp_2019"/>
<dbReference type="PATRIC" id="fig|220668.9.peg.1706"/>
<dbReference type="eggNOG" id="COG1020">
    <property type="taxonomic scope" value="Bacteria"/>
</dbReference>
<dbReference type="HOGENOM" id="CLU_000022_2_12_9"/>
<dbReference type="OrthoDB" id="9765680at2"/>
<dbReference type="PhylomeDB" id="Q88VM6"/>
<dbReference type="UniPathway" id="UPA00556"/>
<dbReference type="Proteomes" id="UP000000432">
    <property type="component" value="Chromosome"/>
</dbReference>
<dbReference type="GO" id="GO:0005737">
    <property type="term" value="C:cytoplasm"/>
    <property type="evidence" value="ECO:0007669"/>
    <property type="project" value="UniProtKB-SubCell"/>
</dbReference>
<dbReference type="GO" id="GO:0005524">
    <property type="term" value="F:ATP binding"/>
    <property type="evidence" value="ECO:0007669"/>
    <property type="project" value="UniProtKB-KW"/>
</dbReference>
<dbReference type="GO" id="GO:0047473">
    <property type="term" value="F:D-alanine [D-alanyl carrier protein] ligase activity"/>
    <property type="evidence" value="ECO:0007669"/>
    <property type="project" value="UniProtKB-UniRule"/>
</dbReference>
<dbReference type="GO" id="GO:0070395">
    <property type="term" value="P:lipoteichoic acid biosynthetic process"/>
    <property type="evidence" value="ECO:0007669"/>
    <property type="project" value="UniProtKB-UniRule"/>
</dbReference>
<dbReference type="CDD" id="cd05945">
    <property type="entry name" value="DltA"/>
    <property type="match status" value="1"/>
</dbReference>
<dbReference type="FunFam" id="3.30.300.30:FF:000012">
    <property type="entry name" value="D-alanine--D-alanyl carrier protein ligase"/>
    <property type="match status" value="1"/>
</dbReference>
<dbReference type="Gene3D" id="3.30.300.30">
    <property type="match status" value="1"/>
</dbReference>
<dbReference type="Gene3D" id="3.40.50.12780">
    <property type="entry name" value="N-terminal domain of ligase-like"/>
    <property type="match status" value="1"/>
</dbReference>
<dbReference type="HAMAP" id="MF_00593">
    <property type="entry name" value="DltA"/>
    <property type="match status" value="1"/>
</dbReference>
<dbReference type="InterPro" id="IPR010071">
    <property type="entry name" value="AA_adenyl_dom"/>
</dbReference>
<dbReference type="InterPro" id="IPR025110">
    <property type="entry name" value="AMP-bd_C"/>
</dbReference>
<dbReference type="InterPro" id="IPR045851">
    <property type="entry name" value="AMP-bd_C_sf"/>
</dbReference>
<dbReference type="InterPro" id="IPR020845">
    <property type="entry name" value="AMP-binding_CS"/>
</dbReference>
<dbReference type="InterPro" id="IPR000873">
    <property type="entry name" value="AMP-dep_synth/lig_dom"/>
</dbReference>
<dbReference type="InterPro" id="IPR042099">
    <property type="entry name" value="ANL_N_sf"/>
</dbReference>
<dbReference type="InterPro" id="IPR010072">
    <property type="entry name" value="DltA"/>
</dbReference>
<dbReference type="InterPro" id="IPR044507">
    <property type="entry name" value="DltA-like"/>
</dbReference>
<dbReference type="NCBIfam" id="TIGR01733">
    <property type="entry name" value="AA-adenyl-dom"/>
    <property type="match status" value="1"/>
</dbReference>
<dbReference type="NCBIfam" id="TIGR01734">
    <property type="entry name" value="D-ala-DACP-lig"/>
    <property type="match status" value="1"/>
</dbReference>
<dbReference type="NCBIfam" id="NF003417">
    <property type="entry name" value="PRK04813.1"/>
    <property type="match status" value="1"/>
</dbReference>
<dbReference type="PANTHER" id="PTHR45398">
    <property type="match status" value="1"/>
</dbReference>
<dbReference type="PANTHER" id="PTHR45398:SF1">
    <property type="entry name" value="ENZYME, PUTATIVE (JCVI)-RELATED"/>
    <property type="match status" value="1"/>
</dbReference>
<dbReference type="Pfam" id="PF00501">
    <property type="entry name" value="AMP-binding"/>
    <property type="match status" value="1"/>
</dbReference>
<dbReference type="Pfam" id="PF13193">
    <property type="entry name" value="AMP-binding_C"/>
    <property type="match status" value="1"/>
</dbReference>
<dbReference type="SUPFAM" id="SSF56801">
    <property type="entry name" value="Acetyl-CoA synthetase-like"/>
    <property type="match status" value="1"/>
</dbReference>
<dbReference type="PROSITE" id="PS00455">
    <property type="entry name" value="AMP_BINDING"/>
    <property type="match status" value="1"/>
</dbReference>
<comment type="function">
    <text evidence="1">Catalyzes the first step in the D-alanylation of lipoteichoic acid (LTA), the activation of D-alanine and its transfer onto the D-alanyl carrier protein (Dcp) DltC. In an ATP-dependent two-step reaction, forms a high energy D-alanyl-AMP intermediate, followed by transfer of the D-alanyl residue as a thiol ester to the phosphopantheinyl prosthetic group of the Dcp. D-alanylation of LTA plays an important role in modulating the properties of the cell wall in Gram-positive bacteria, influencing the net charge of the cell wall.</text>
</comment>
<comment type="catalytic activity">
    <reaction evidence="1">
        <text>holo-[D-alanyl-carrier protein] + D-alanine + ATP = D-alanyl-[D-alanyl-carrier protein] + AMP + diphosphate</text>
        <dbReference type="Rhea" id="RHEA:55132"/>
        <dbReference type="Rhea" id="RHEA-COMP:14102"/>
        <dbReference type="Rhea" id="RHEA-COMP:14103"/>
        <dbReference type="ChEBI" id="CHEBI:30616"/>
        <dbReference type="ChEBI" id="CHEBI:33019"/>
        <dbReference type="ChEBI" id="CHEBI:57416"/>
        <dbReference type="ChEBI" id="CHEBI:64479"/>
        <dbReference type="ChEBI" id="CHEBI:138620"/>
        <dbReference type="ChEBI" id="CHEBI:456215"/>
        <dbReference type="EC" id="6.2.1.54"/>
    </reaction>
</comment>
<comment type="pathway">
    <text evidence="1">Cell wall biogenesis; lipoteichoic acid biosynthesis.</text>
</comment>
<comment type="subcellular location">
    <subcellularLocation>
        <location evidence="1">Cytoplasm</location>
    </subcellularLocation>
</comment>
<comment type="similarity">
    <text evidence="1">Belongs to the ATP-dependent AMP-binding enzyme family. DltA subfamily.</text>
</comment>
<accession>Q88VM6</accession>
<accession>F9UPX8</accession>
<reference key="1">
    <citation type="journal article" date="2003" name="Proc. Natl. Acad. Sci. U.S.A.">
        <title>Complete genome sequence of Lactobacillus plantarum WCFS1.</title>
        <authorList>
            <person name="Kleerebezem M."/>
            <person name="Boekhorst J."/>
            <person name="van Kranenburg R."/>
            <person name="Molenaar D."/>
            <person name="Kuipers O.P."/>
            <person name="Leer R."/>
            <person name="Tarchini R."/>
            <person name="Peters S.A."/>
            <person name="Sandbrink H.M."/>
            <person name="Fiers M.W.E.J."/>
            <person name="Stiekema W."/>
            <person name="Klein Lankhorst R.M."/>
            <person name="Bron P.A."/>
            <person name="Hoffer S.M."/>
            <person name="Nierop Groot M.N."/>
            <person name="Kerkhoven R."/>
            <person name="De Vries M."/>
            <person name="Ursing B."/>
            <person name="De Vos W.M."/>
            <person name="Siezen R.J."/>
        </authorList>
    </citation>
    <scope>NUCLEOTIDE SEQUENCE [LARGE SCALE GENOMIC DNA]</scope>
    <source>
        <strain>ATCC BAA-793 / NCIMB 8826 / WCFS1</strain>
    </source>
</reference>
<reference key="2">
    <citation type="journal article" date="2012" name="J. Bacteriol.">
        <title>Complete resequencing and reannotation of the Lactobacillus plantarum WCFS1 genome.</title>
        <authorList>
            <person name="Siezen R.J."/>
            <person name="Francke C."/>
            <person name="Renckens B."/>
            <person name="Boekhorst J."/>
            <person name="Wels M."/>
            <person name="Kleerebezem M."/>
            <person name="van Hijum S.A."/>
        </authorList>
    </citation>
    <scope>NUCLEOTIDE SEQUENCE [LARGE SCALE GENOMIC DNA]</scope>
    <scope>GENOME REANNOTATION</scope>
    <source>
        <strain>ATCC BAA-793 / NCIMB 8826 / WCFS1</strain>
    </source>
</reference>
<feature type="chain" id="PRO_0000213144" description="D-alanine--D-alanyl carrier protein ligase">
    <location>
        <begin position="1"/>
        <end position="508"/>
    </location>
</feature>
<feature type="binding site" evidence="1">
    <location>
        <begin position="152"/>
        <end position="153"/>
    </location>
    <ligand>
        <name>ATP</name>
        <dbReference type="ChEBI" id="CHEBI:30616"/>
    </ligand>
</feature>
<feature type="binding site" evidence="1">
    <location>
        <position position="198"/>
    </location>
    <ligand>
        <name>D-alanine</name>
        <dbReference type="ChEBI" id="CHEBI:57416"/>
    </ligand>
</feature>
<feature type="binding site" evidence="1">
    <location>
        <begin position="293"/>
        <end position="298"/>
    </location>
    <ligand>
        <name>ATP</name>
        <dbReference type="ChEBI" id="CHEBI:30616"/>
    </ligand>
</feature>
<feature type="binding site" evidence="1">
    <location>
        <position position="302"/>
    </location>
    <ligand>
        <name>D-alanine</name>
        <dbReference type="ChEBI" id="CHEBI:57416"/>
    </ligand>
</feature>
<feature type="binding site" evidence="1">
    <location>
        <position position="384"/>
    </location>
    <ligand>
        <name>ATP</name>
        <dbReference type="ChEBI" id="CHEBI:30616"/>
    </ligand>
</feature>
<feature type="binding site" evidence="1">
    <location>
        <begin position="396"/>
        <end position="399"/>
    </location>
    <ligand>
        <name>ATP</name>
        <dbReference type="ChEBI" id="CHEBI:30616"/>
    </ligand>
</feature>
<feature type="binding site" evidence="1">
    <location>
        <position position="495"/>
    </location>
    <ligand>
        <name>ATP</name>
        <dbReference type="ChEBI" id="CHEBI:30616"/>
    </ligand>
</feature>
<feature type="binding site" evidence="1">
    <location>
        <position position="495"/>
    </location>
    <ligand>
        <name>D-alanine</name>
        <dbReference type="ChEBI" id="CHEBI:57416"/>
    </ligand>
</feature>
<sequence length="508" mass="56081">MIKNIITTIDDYARTQPNNVVYDVQGVTHTYAELKAYSDALAAHLDTLDLPAKDPIIVFGGQTFEMIATFLGVVKSGRAYIPIDTHSPNERLTMINEIAKPAAVIAVADLPTGVGTTPVITPDQLAAIFATPVDYQADHVVSGDDNYYIIFTSGTTGMPKGVQISHDNLVSYVDWMLSDDFGLPDQPNSLSQPPYSFDLSVMDVYPTLALGGTLYALPKAVTDDFKQLFAALPTLPINVWVSTPSFMDICLLEPKFNAENLPTLTHFLFCGEELTHKTAATLKKRFPDARIFNTYGPTETCVAVTQIEITDAALAQYDRLPIGYAKADTRILVVDENGEAVPNGTEGELIIAGPSVSKGYLNNSEKTAKAFFELDGQPAYHSGDIGTMDADGLFRYRGRVDFQIKMHGYRIELEEVDHFLAQQQHIKQAVAVPKYDKEHKVTQMIAYVVPKPNDFESDFALTTAIKKDLQGMMMEYMIPQRFVYQTSLPLTPNGKIDVKSIIKEVNPE</sequence>